<feature type="initiator methionine" description="Removed" evidence="1">
    <location>
        <position position="1"/>
    </location>
</feature>
<feature type="chain" id="PRO_0000091206" description="Elongation factor G">
    <location>
        <begin position="2"/>
        <end position="704"/>
    </location>
</feature>
<feature type="domain" description="tr-type G">
    <location>
        <begin position="8"/>
        <end position="290"/>
    </location>
</feature>
<feature type="binding site" evidence="2">
    <location>
        <begin position="17"/>
        <end position="24"/>
    </location>
    <ligand>
        <name>GTP</name>
        <dbReference type="ChEBI" id="CHEBI:37565"/>
    </ligand>
</feature>
<feature type="binding site" evidence="2">
    <location>
        <begin position="88"/>
        <end position="92"/>
    </location>
    <ligand>
        <name>GTP</name>
        <dbReference type="ChEBI" id="CHEBI:37565"/>
    </ligand>
</feature>
<feature type="binding site" evidence="2">
    <location>
        <begin position="142"/>
        <end position="145"/>
    </location>
    <ligand>
        <name>GTP</name>
        <dbReference type="ChEBI" id="CHEBI:37565"/>
    </ligand>
</feature>
<name>EFG_SALPA</name>
<sequence length="704" mass="77599">MARTTPIARYRNIGISAHIDAGKTTTTERILFYTGVNHKIGEVHDGAATMDWMEQEQERGITITSAATTAFWSGMAKQYEPHRINIIDTPGHVDFTIEVERSMRVLDGAVMVYCAVGGVQPQSETVWRQANKYKVPRIAFVNKMDRMGANFLKVVGQIKTRLGANPVPLQLAIGAEEGFTGVVDLVKMKAINWNDADQGVTFEYEDIPADMQDLANEWHQNLIESAAEASEELMEKYLGGEELTEEEIKQALRQRVLNNEIILVTCGSAFKNKGVQAMLDAVIDYLPSPVDVPAINGILDDGKDTPAERHASDDEPFSALAFKIATDPFVGNLTFFRVYSGVVNSGDTVLNSVKTARERFGRIVQMHANKREEIKEVRAGDIAAAIGLKDVTTGDTLCDPENPIILERMEFPEPVISIAVEPKTKADQEKMGLALGRLAKEDPSFRVWTDEESNQTIIAGMGELHLDIIVDRMKREFNVEANVGKPQVAYREAIRAKVTDIEGKHAKQSGGRGQYGHVVIDMYPLEPGSNPKGYEFINDIKGGVIPGEYIPAVDKGIQEQLKSGPLAGYPVVDLGVRLHFGSYHDVDSSELAFKLAASIAFKEGFKKAKPVLLEPIMKVEVETPEENTGDVIGDLSRRRGMLKGQESEVTGVKIHAEVPLSEMFGYATQLRSLTKGRASYTMEFLKYDDAPNNVAQAVIEARGK</sequence>
<accession>Q5PIW3</accession>
<proteinExistence type="inferred from homology"/>
<comment type="function">
    <text evidence="2">Catalyzes the GTP-dependent ribosomal translocation step during translation elongation. During this step, the ribosome changes from the pre-translocational (PRE) to the post-translocational (POST) state as the newly formed A-site-bound peptidyl-tRNA and P-site-bound deacylated tRNA move to the P and E sites, respectively. Catalyzes the coordinated movement of the two tRNA molecules, the mRNA and conformational changes in the ribosome.</text>
</comment>
<comment type="subcellular location">
    <subcellularLocation>
        <location evidence="2">Cytoplasm</location>
    </subcellularLocation>
</comment>
<comment type="similarity">
    <text evidence="2">Belongs to the TRAFAC class translation factor GTPase superfamily. Classic translation factor GTPase family. EF-G/EF-2 subfamily.</text>
</comment>
<organism>
    <name type="scientific">Salmonella paratyphi A (strain ATCC 9150 / SARB42)</name>
    <dbReference type="NCBI Taxonomy" id="295319"/>
    <lineage>
        <taxon>Bacteria</taxon>
        <taxon>Pseudomonadati</taxon>
        <taxon>Pseudomonadota</taxon>
        <taxon>Gammaproteobacteria</taxon>
        <taxon>Enterobacterales</taxon>
        <taxon>Enterobacteriaceae</taxon>
        <taxon>Salmonella</taxon>
    </lineage>
</organism>
<evidence type="ECO:0000250" key="1"/>
<evidence type="ECO:0000255" key="2">
    <source>
        <dbReference type="HAMAP-Rule" id="MF_00054"/>
    </source>
</evidence>
<gene>
    <name evidence="2" type="primary">fusA</name>
    <name type="ordered locus">SPA3312</name>
</gene>
<dbReference type="EMBL" id="CP000026">
    <property type="protein sequence ID" value="AAV79128.1"/>
    <property type="molecule type" value="Genomic_DNA"/>
</dbReference>
<dbReference type="RefSeq" id="WP_000124693.1">
    <property type="nucleotide sequence ID" value="NC_006511.1"/>
</dbReference>
<dbReference type="SMR" id="Q5PIW3"/>
<dbReference type="KEGG" id="spt:SPA3312"/>
<dbReference type="HOGENOM" id="CLU_002794_4_1_6"/>
<dbReference type="Proteomes" id="UP000008185">
    <property type="component" value="Chromosome"/>
</dbReference>
<dbReference type="GO" id="GO:0005737">
    <property type="term" value="C:cytoplasm"/>
    <property type="evidence" value="ECO:0007669"/>
    <property type="project" value="UniProtKB-SubCell"/>
</dbReference>
<dbReference type="GO" id="GO:0005525">
    <property type="term" value="F:GTP binding"/>
    <property type="evidence" value="ECO:0007669"/>
    <property type="project" value="UniProtKB-UniRule"/>
</dbReference>
<dbReference type="GO" id="GO:0003924">
    <property type="term" value="F:GTPase activity"/>
    <property type="evidence" value="ECO:0007669"/>
    <property type="project" value="InterPro"/>
</dbReference>
<dbReference type="GO" id="GO:0097216">
    <property type="term" value="F:guanosine tetraphosphate binding"/>
    <property type="evidence" value="ECO:0007669"/>
    <property type="project" value="UniProtKB-ARBA"/>
</dbReference>
<dbReference type="GO" id="GO:0003746">
    <property type="term" value="F:translation elongation factor activity"/>
    <property type="evidence" value="ECO:0007669"/>
    <property type="project" value="UniProtKB-UniRule"/>
</dbReference>
<dbReference type="GO" id="GO:0032790">
    <property type="term" value="P:ribosome disassembly"/>
    <property type="evidence" value="ECO:0007669"/>
    <property type="project" value="TreeGrafter"/>
</dbReference>
<dbReference type="CDD" id="cd01886">
    <property type="entry name" value="EF-G"/>
    <property type="match status" value="1"/>
</dbReference>
<dbReference type="CDD" id="cd16262">
    <property type="entry name" value="EFG_III"/>
    <property type="match status" value="1"/>
</dbReference>
<dbReference type="CDD" id="cd01434">
    <property type="entry name" value="EFG_mtEFG1_IV"/>
    <property type="match status" value="1"/>
</dbReference>
<dbReference type="CDD" id="cd03713">
    <property type="entry name" value="EFG_mtEFG_C"/>
    <property type="match status" value="1"/>
</dbReference>
<dbReference type="CDD" id="cd04088">
    <property type="entry name" value="EFG_mtEFG_II"/>
    <property type="match status" value="1"/>
</dbReference>
<dbReference type="FunFam" id="2.40.30.10:FF:000006">
    <property type="entry name" value="Elongation factor G"/>
    <property type="match status" value="1"/>
</dbReference>
<dbReference type="FunFam" id="3.30.230.10:FF:000003">
    <property type="entry name" value="Elongation factor G"/>
    <property type="match status" value="1"/>
</dbReference>
<dbReference type="FunFam" id="3.30.70.240:FF:000001">
    <property type="entry name" value="Elongation factor G"/>
    <property type="match status" value="1"/>
</dbReference>
<dbReference type="FunFam" id="3.30.70.870:FF:000001">
    <property type="entry name" value="Elongation factor G"/>
    <property type="match status" value="1"/>
</dbReference>
<dbReference type="FunFam" id="3.40.50.300:FF:000029">
    <property type="entry name" value="Elongation factor G"/>
    <property type="match status" value="1"/>
</dbReference>
<dbReference type="Gene3D" id="3.30.230.10">
    <property type="match status" value="1"/>
</dbReference>
<dbReference type="Gene3D" id="3.30.70.240">
    <property type="match status" value="1"/>
</dbReference>
<dbReference type="Gene3D" id="3.30.70.870">
    <property type="entry name" value="Elongation Factor G (Translational Gtpase), domain 3"/>
    <property type="match status" value="1"/>
</dbReference>
<dbReference type="Gene3D" id="3.40.50.300">
    <property type="entry name" value="P-loop containing nucleotide triphosphate hydrolases"/>
    <property type="match status" value="1"/>
</dbReference>
<dbReference type="Gene3D" id="2.40.30.10">
    <property type="entry name" value="Translation factors"/>
    <property type="match status" value="1"/>
</dbReference>
<dbReference type="HAMAP" id="MF_00054_B">
    <property type="entry name" value="EF_G_EF_2_B"/>
    <property type="match status" value="1"/>
</dbReference>
<dbReference type="InterPro" id="IPR041095">
    <property type="entry name" value="EFG_II"/>
</dbReference>
<dbReference type="InterPro" id="IPR009022">
    <property type="entry name" value="EFG_III"/>
</dbReference>
<dbReference type="InterPro" id="IPR035647">
    <property type="entry name" value="EFG_III/V"/>
</dbReference>
<dbReference type="InterPro" id="IPR047872">
    <property type="entry name" value="EFG_IV"/>
</dbReference>
<dbReference type="InterPro" id="IPR035649">
    <property type="entry name" value="EFG_V"/>
</dbReference>
<dbReference type="InterPro" id="IPR000640">
    <property type="entry name" value="EFG_V-like"/>
</dbReference>
<dbReference type="InterPro" id="IPR004161">
    <property type="entry name" value="EFTu-like_2"/>
</dbReference>
<dbReference type="InterPro" id="IPR031157">
    <property type="entry name" value="G_TR_CS"/>
</dbReference>
<dbReference type="InterPro" id="IPR027417">
    <property type="entry name" value="P-loop_NTPase"/>
</dbReference>
<dbReference type="InterPro" id="IPR020568">
    <property type="entry name" value="Ribosomal_Su5_D2-typ_SF"/>
</dbReference>
<dbReference type="InterPro" id="IPR014721">
    <property type="entry name" value="Ribsml_uS5_D2-typ_fold_subgr"/>
</dbReference>
<dbReference type="InterPro" id="IPR005225">
    <property type="entry name" value="Small_GTP-bd"/>
</dbReference>
<dbReference type="InterPro" id="IPR000795">
    <property type="entry name" value="T_Tr_GTP-bd_dom"/>
</dbReference>
<dbReference type="InterPro" id="IPR009000">
    <property type="entry name" value="Transl_B-barrel_sf"/>
</dbReference>
<dbReference type="InterPro" id="IPR004540">
    <property type="entry name" value="Transl_elong_EFG/EF2"/>
</dbReference>
<dbReference type="InterPro" id="IPR005517">
    <property type="entry name" value="Transl_elong_EFG/EF2_IV"/>
</dbReference>
<dbReference type="NCBIfam" id="TIGR00484">
    <property type="entry name" value="EF-G"/>
    <property type="match status" value="1"/>
</dbReference>
<dbReference type="NCBIfam" id="NF009381">
    <property type="entry name" value="PRK12740.1-5"/>
    <property type="match status" value="1"/>
</dbReference>
<dbReference type="NCBIfam" id="TIGR00231">
    <property type="entry name" value="small_GTP"/>
    <property type="match status" value="1"/>
</dbReference>
<dbReference type="PANTHER" id="PTHR43261:SF1">
    <property type="entry name" value="RIBOSOME-RELEASING FACTOR 2, MITOCHONDRIAL"/>
    <property type="match status" value="1"/>
</dbReference>
<dbReference type="PANTHER" id="PTHR43261">
    <property type="entry name" value="TRANSLATION ELONGATION FACTOR G-RELATED"/>
    <property type="match status" value="1"/>
</dbReference>
<dbReference type="Pfam" id="PF00679">
    <property type="entry name" value="EFG_C"/>
    <property type="match status" value="1"/>
</dbReference>
<dbReference type="Pfam" id="PF14492">
    <property type="entry name" value="EFG_III"/>
    <property type="match status" value="1"/>
</dbReference>
<dbReference type="Pfam" id="PF03764">
    <property type="entry name" value="EFG_IV"/>
    <property type="match status" value="1"/>
</dbReference>
<dbReference type="Pfam" id="PF00009">
    <property type="entry name" value="GTP_EFTU"/>
    <property type="match status" value="1"/>
</dbReference>
<dbReference type="Pfam" id="PF03144">
    <property type="entry name" value="GTP_EFTU_D2"/>
    <property type="match status" value="1"/>
</dbReference>
<dbReference type="PRINTS" id="PR00315">
    <property type="entry name" value="ELONGATNFCT"/>
</dbReference>
<dbReference type="SMART" id="SM00838">
    <property type="entry name" value="EFG_C"/>
    <property type="match status" value="1"/>
</dbReference>
<dbReference type="SMART" id="SM00889">
    <property type="entry name" value="EFG_IV"/>
    <property type="match status" value="1"/>
</dbReference>
<dbReference type="SUPFAM" id="SSF54980">
    <property type="entry name" value="EF-G C-terminal domain-like"/>
    <property type="match status" value="2"/>
</dbReference>
<dbReference type="SUPFAM" id="SSF52540">
    <property type="entry name" value="P-loop containing nucleoside triphosphate hydrolases"/>
    <property type="match status" value="1"/>
</dbReference>
<dbReference type="SUPFAM" id="SSF54211">
    <property type="entry name" value="Ribosomal protein S5 domain 2-like"/>
    <property type="match status" value="1"/>
</dbReference>
<dbReference type="SUPFAM" id="SSF50447">
    <property type="entry name" value="Translation proteins"/>
    <property type="match status" value="1"/>
</dbReference>
<dbReference type="PROSITE" id="PS00301">
    <property type="entry name" value="G_TR_1"/>
    <property type="match status" value="1"/>
</dbReference>
<dbReference type="PROSITE" id="PS51722">
    <property type="entry name" value="G_TR_2"/>
    <property type="match status" value="1"/>
</dbReference>
<protein>
    <recommendedName>
        <fullName evidence="2">Elongation factor G</fullName>
        <shortName evidence="2">EF-G</shortName>
    </recommendedName>
</protein>
<keyword id="KW-0963">Cytoplasm</keyword>
<keyword id="KW-0251">Elongation factor</keyword>
<keyword id="KW-0342">GTP-binding</keyword>
<keyword id="KW-0547">Nucleotide-binding</keyword>
<keyword id="KW-0648">Protein biosynthesis</keyword>
<reference key="1">
    <citation type="journal article" date="2004" name="Nat. Genet.">
        <title>Comparison of genome degradation in Paratyphi A and Typhi, human-restricted serovars of Salmonella enterica that cause typhoid.</title>
        <authorList>
            <person name="McClelland M."/>
            <person name="Sanderson K.E."/>
            <person name="Clifton S.W."/>
            <person name="Latreille P."/>
            <person name="Porwollik S."/>
            <person name="Sabo A."/>
            <person name="Meyer R."/>
            <person name="Bieri T."/>
            <person name="Ozersky P."/>
            <person name="McLellan M."/>
            <person name="Harkins C.R."/>
            <person name="Wang C."/>
            <person name="Nguyen C."/>
            <person name="Berghoff A."/>
            <person name="Elliott G."/>
            <person name="Kohlberg S."/>
            <person name="Strong C."/>
            <person name="Du F."/>
            <person name="Carter J."/>
            <person name="Kremizki C."/>
            <person name="Layman D."/>
            <person name="Leonard S."/>
            <person name="Sun H."/>
            <person name="Fulton L."/>
            <person name="Nash W."/>
            <person name="Miner T."/>
            <person name="Minx P."/>
            <person name="Delehaunty K."/>
            <person name="Fronick C."/>
            <person name="Magrini V."/>
            <person name="Nhan M."/>
            <person name="Warren W."/>
            <person name="Florea L."/>
            <person name="Spieth J."/>
            <person name="Wilson R.K."/>
        </authorList>
    </citation>
    <scope>NUCLEOTIDE SEQUENCE [LARGE SCALE GENOMIC DNA]</scope>
    <source>
        <strain>ATCC 9150 / SARB42</strain>
    </source>
</reference>